<comment type="function">
    <text evidence="2 7">Major capsid protein that self-associates to form 240 hexon trimers, each in the shape of a hexagon, building most of the pseudo T=25 capsid. Assembled into trimeric units with the help of the chaperone shutoff protein. Transported by pre-protein VI to the nucleus where it associates with other structural proteins to form an empty capsid. Might be involved, through its interaction with host dyneins, in the intracellular microtubule-dependent transport of incoming viral capsid to the nucleus.</text>
</comment>
<comment type="subunit">
    <text evidence="1 2 4 5 6 7 11 12">Homotrimer. Interacts with the capsid vertex protein; this interaction binds the peripentonal hexons to the neighboring penton base. Interacts with the hexon-linking protein; this interaction tethers the hexons surrounding the penton to those situated in the central plate of the facet. Interacts with the hexon-interlacing protein; this interaction lashes the hexons together. Interacts with pre-protein VI; this interaction probably allows nuclear import of hexon trimers and possibly pre-capsid assembly. Interacts with host dyneins DYNC1LI1 and DYNC1I2; this interaction might be involved in intracellular microtubule-dependent transport of incoming viral capsid. Interacts with the shutoff protein; this interaction allows folding and formation of hexons trimers. Interacts with host NUP214 (via N-terminus); this interaction might be essential for the release of the virus genome to the nucleus (By similarity).</text>
</comment>
<comment type="subcellular location">
    <subcellularLocation>
        <location evidence="2 7">Virion</location>
    </subcellularLocation>
    <subcellularLocation>
        <location evidence="2 7">Host nucleus</location>
    </subcellularLocation>
    <text evidence="2">Forms the capsid icosahedric shell. Present in 720 copies per virion, assembled in 240 trimers.</text>
</comment>
<comment type="induction">
    <text evidence="2">Expressed in the late phase of the viral replicative cycle.</text>
</comment>
<comment type="miscellaneous">
    <text evidence="2">All late proteins expressed from the major late promoter are produced by alternative splicing and alternative polyadenylation of the same gene giving rise to non-overlapping ORFs. A leader sequence is present in the N-terminus of all these mRNAs and is recognized by the viral shutoff protein to provide expression although conventional translation via ribosome scanning from the cap has been shut off in the host cell.</text>
</comment>
<comment type="similarity">
    <text evidence="2 13">Belongs to the adenoviridae hexon protein family.</text>
</comment>
<reference key="1">
    <citation type="journal article" date="1984" name="J. Biol. Chem.">
        <title>The gene for the adenovirus 2 hexon polypeptide.</title>
        <authorList>
            <person name="Akusjaervi G."/>
            <person name="Alestroem P."/>
            <person name="Pettersson M."/>
            <person name="Lager M."/>
            <person name="Joernvall H."/>
            <person name="Pettersson U."/>
        </authorList>
    </citation>
    <scope>NUCLEOTIDE SEQUENCE [GENOMIC DNA]</scope>
</reference>
<reference key="2">
    <citation type="journal article" date="1981" name="J. Biol. Chem.">
        <title>The adenovirus hexon protein. The primary structure of the polypeptide and its correlation with the hexon gene.</title>
        <authorList>
            <person name="Joernvall H."/>
            <person name="Akusjaervi G."/>
            <person name="Alestroem P."/>
            <person name="von Bahr-Lindstroem H."/>
            <person name="Pettersson U."/>
            <person name="Appella E."/>
            <person name="Fowler A.V."/>
            <person name="Philipson L."/>
        </authorList>
    </citation>
    <scope>PROTEIN SEQUENCE OF 2-455 AND 457-968</scope>
</reference>
<reference key="3">
    <citation type="journal article" date="2012" name="Virology">
        <title>The phosphoproteome of the adenovirus type 2 virion.</title>
        <authorList>
            <person name="Bergstrom Lind S."/>
            <person name="Artemenko K.A."/>
            <person name="Elfineh L."/>
            <person name="Zhao Y."/>
            <person name="Bergquist J."/>
            <person name="Pettersson U."/>
        </authorList>
    </citation>
    <scope>PROTEIN SEQUENCE OF 173-188; 273-287 AND 950-958</scope>
    <scope>PHOSPHORYLATION AT SER-182; SER-283 AND TYR-956</scope>
</reference>
<reference key="4">
    <citation type="journal article" date="1981" name="Nucleic Acids Res.">
        <title>The sequence of the 3' non-coding region of the hexon mRNA discloses a novel adenovirus gene.</title>
        <authorList>
            <person name="Akusjaervi G."/>
            <person name="Zabielski J."/>
            <person name="Perricaudet M."/>
            <person name="Pettersson U."/>
        </authorList>
    </citation>
    <scope>NUCLEOTIDE SEQUENCE [GENOMIC DNA] OF 923-967</scope>
</reference>
<reference key="5">
    <citation type="journal article" date="1982" name="Cell">
        <title>Assembly of adenovirus major capsid protein is mediated by a nonvirion protein.</title>
        <authorList>
            <person name="Cepko C.L."/>
            <person name="Sharp P.A."/>
        </authorList>
    </citation>
    <scope>INTERACTION WITH SHUTOFF PROTEIN</scope>
</reference>
<reference key="6">
    <citation type="journal article" date="1974" name="Biochem. Biophys. Res. Commun.">
        <title>An acetylated N-terminus of adenovirus type 2 hexon protein.</title>
        <authorList>
            <person name="Joernvall H."/>
            <person name="Ohlsson H."/>
            <person name="Philipson L."/>
        </authorList>
    </citation>
    <scope>ACETYLATION AT ALA-2</scope>
</reference>
<reference key="7">
    <citation type="journal article" date="1995" name="J. Gen. Virol.">
        <title>Adenovirus protein-protein interactions: molecular parameters governing the binding of protein VI to hexon and the activation of the adenovirus 23K protease.</title>
        <authorList>
            <person name="Matthews D.A."/>
            <person name="Russell W.C."/>
        </authorList>
    </citation>
    <scope>INTERACTION WITH PRE-PROTEIN VI</scope>
</reference>
<reference key="8">
    <citation type="journal article" date="2003" name="EMBO J.">
        <title>Switch from capsid protein import to adenovirus assembly by cleavage of nuclear transport signals.</title>
        <authorList>
            <person name="Wodrich H."/>
            <person name="Guan T."/>
            <person name="Cingolani G."/>
            <person name="Von Seggern D."/>
            <person name="Nemerow G."/>
            <person name="Gerace L."/>
        </authorList>
    </citation>
    <scope>INTERACTION WITH PRE-PROTEIN VI</scope>
    <source>
        <strain>Ad5 ts147 mutant</strain>
        <strain>Human adenovirus C serotype 5</strain>
    </source>
</reference>
<reference key="9">
    <citation type="journal article" date="2005" name="J. Mol. Biol.">
        <title>The 100K-chaperone protein from adenovirus serotype 2 (Subgroup C) assists in trimerization and nuclear localization of hexons from subgroups C and B adenoviruses.</title>
        <authorList>
            <person name="Hong S.S."/>
            <person name="Szolajska E."/>
            <person name="Schoehn G."/>
            <person name="Franqueville L."/>
            <person name="Myhre S."/>
            <person name="Lindholm L."/>
            <person name="Ruigrok R.W."/>
            <person name="Boulanger P."/>
            <person name="Chroboczek J."/>
        </authorList>
    </citation>
    <scope>INTERACTION WITH THE SHUTOFF PROTEIN</scope>
</reference>
<reference key="10">
    <citation type="journal article" date="2009" name="Cell Host Microbe">
        <title>Adenovirus transport via direct interaction of cytoplasmic dynein with the viral capsid hexon subunit.</title>
        <authorList>
            <person name="Bremner K.H."/>
            <person name="Scherer J."/>
            <person name="Yi J."/>
            <person name="Vershinin M."/>
            <person name="Gross S.P."/>
            <person name="Vallee R.B."/>
        </authorList>
    </citation>
    <scope>INTERACTION WITH HUMAN DYNEINS DYNC1LI1 AND DYNC1I2</scope>
    <source>
        <strain>Human adenovirus C serotype 5</strain>
    </source>
</reference>
<reference key="11">
    <citation type="journal article" date="2012" name="Viruses">
        <title>Latest insights on adenovirus structure and assembly.</title>
        <authorList>
            <person name="San Martin C."/>
        </authorList>
    </citation>
    <scope>REVIEW</scope>
</reference>
<reference key="12">
    <citation type="journal article" date="2010" name="Science">
        <title>Atomic structure of human adenovirus by cryo-EM reveals interactions among protein networks.</title>
        <authorList>
            <person name="Liu H."/>
            <person name="Jin L."/>
            <person name="Koh S.B."/>
            <person name="Atanasov I."/>
            <person name="Schein S."/>
            <person name="Wu L."/>
            <person name="Zhou Z.H."/>
        </authorList>
    </citation>
    <scope>STRUCTURE BY ELECTRON MICROSCOPY (3.6 ANGSTROMS) OF THE VIRAL PARTICLE</scope>
    <scope>FUNCTION</scope>
    <scope>SUBCELLULAR LOCATION</scope>
    <scope>INTERACTION WITH CAPSID VERTEX PROTEIN AND HEXON-LINKING PROTEIN</scope>
    <source>
        <strain>Human adenovirus C serotype 5</strain>
    </source>
</reference>
<reference key="13">
    <citation type="journal article" date="1994" name="J. Mol. Biol.">
        <title>The refined crystal structure of hexon, the major coat protein of adenovirus type 2, at 2.9-A resolution.</title>
        <authorList>
            <person name="Athappilly F.K."/>
            <person name="Murali R."/>
            <person name="Rux J.J."/>
            <person name="Cai Z."/>
            <person name="Burnett R.M."/>
        </authorList>
    </citation>
    <scope>X-RAY CRYSTALLOGRAPHY (2.9 ANGSTROMS)</scope>
</reference>
<name>CAPSH_ADE02</name>
<organismHost>
    <name type="scientific">Homo sapiens</name>
    <name type="common">Human</name>
    <dbReference type="NCBI Taxonomy" id="9606"/>
</organismHost>
<organism>
    <name type="scientific">Human adenovirus C serotype 2</name>
    <name type="common">HAdV-2</name>
    <name type="synonym">Human adenovirus 2</name>
    <dbReference type="NCBI Taxonomy" id="10515"/>
    <lineage>
        <taxon>Viruses</taxon>
        <taxon>Varidnaviria</taxon>
        <taxon>Bamfordvirae</taxon>
        <taxon>Preplasmiviricota</taxon>
        <taxon>Tectiliviricetes</taxon>
        <taxon>Rowavirales</taxon>
        <taxon>Adenoviridae</taxon>
        <taxon>Mastadenovirus</taxon>
        <taxon>Human mastadenovirus C</taxon>
    </lineage>
</organism>
<sequence length="968" mass="109153">MATPSMMPQWSYMHISGQDASEYLSPGLVQFARATETYFSLNNKFRNPTVAPTHDVTTDRSQRLTLRFIPVDREDTAYSYKARFTLAVGDNRVLDMASTYFDIRGVLDRGPTFKPYSGTAYNALAPKGAPNSCEWEQTEDSGRAVAEDEEEEDEDEEEEEEEQNARDQATKKTHVYAQAPLSGETITKSGLQIGSDNAETQAKPVYADPSYQPEPQIGESQWNEADANAAGGRVLKKTTPMKPCYGSYARPTNPFGGQSVLVPDEKGVPLPKVDLQFFSNTTSLNDRQGNATKPKVVLYSEDVNMETPDTHLSYKPGKGDENSKAMLGQQSMPNRPNYIAFRDNFIGLMYYNSTGNMGVLAGQASQLNAVVDLQDRNTELSYQLLLDSIGDRTRYFSMWNQAVDSYDPDVRIIENHGTEDELPNYCFPLGGIGVTDTYQAIKANGNGSGDNGDTTWTKDETFATRNEIGVGNNFAMEINLNANLWRNFLYSNIALYLPDKLKYNPTNVEISDNPNTYDYMNKRVVAPGLVDCYINLGARWSLDYMDNVNPFNHHRNAGLRYRSMLLGNGRYVPFHIQVPQKFFAIKNLLLLPGSYTYEWNFRKDVNMVLQSSLGNDLRVDGASIKFDSICLYATFFPMAHNTASTLEAMLRNDTNDQSFNDYLSAANMLYPIPANATNVPISIPSRNWAAFRGWAFTRLKTKETPSLGSGYDPYYTYSGSIPYLDGTFYLNHTFKKVAITFDSSVSWPGNDRLLTPNEFEIKRSVDGEGYNVAQCNMTKDWFLVQMLANYNIGYQGFYIPESYKDRMYSFFRNFQPMSRQVVDDTKYKEYQQVGILHQHNNSGFVGYLAPTMREGQAYPANVPYPLIGKTAVDSITQKKFLCDRTLWRIPFSSNFMSMGALTDLGQNLLYANSAHALDMTFEVDPMDEPTLLYVLFEVFDVVRVHQPHRGVIETVYLRTPFSAGNATT</sequence>
<proteinExistence type="evidence at protein level"/>
<protein>
    <recommendedName>
        <fullName evidence="2">Hexon protein</fullName>
        <shortName evidence="2">CP-H</shortName>
    </recommendedName>
    <alternativeName>
        <fullName evidence="2">Protein II</fullName>
    </alternativeName>
</protein>
<accession>P03277</accession>
<dbReference type="EMBL" id="J01917">
    <property type="protein sequence ID" value="AAA92215.1"/>
    <property type="molecule type" value="Genomic_DNA"/>
</dbReference>
<dbReference type="PIR" id="A94597">
    <property type="entry name" value="HXAD2"/>
</dbReference>
<dbReference type="RefSeq" id="AP_000175.1">
    <property type="nucleotide sequence ID" value="AC_000007.1"/>
</dbReference>
<dbReference type="RefSeq" id="NP_040525.1">
    <property type="nucleotide sequence ID" value="NC_001405.1"/>
</dbReference>
<dbReference type="PDB" id="1P2Z">
    <property type="method" value="X-ray"/>
    <property type="resolution" value="2.20 A"/>
    <property type="chains" value="A=2-968"/>
</dbReference>
<dbReference type="PDBsum" id="1P2Z"/>
<dbReference type="SMR" id="P03277"/>
<dbReference type="DrugBank" id="DB04272">
    <property type="generic name" value="Citric acid"/>
</dbReference>
<dbReference type="iPTMnet" id="P03277"/>
<dbReference type="GeneID" id="2652998"/>
<dbReference type="KEGG" id="vg:2652998"/>
<dbReference type="EvolutionaryTrace" id="P03277"/>
<dbReference type="Proteomes" id="UP000008167">
    <property type="component" value="Segment"/>
</dbReference>
<dbReference type="GO" id="GO:0043657">
    <property type="term" value="C:host cell"/>
    <property type="evidence" value="ECO:0007669"/>
    <property type="project" value="GOC"/>
</dbReference>
<dbReference type="GO" id="GO:0042025">
    <property type="term" value="C:host cell nucleus"/>
    <property type="evidence" value="ECO:0007669"/>
    <property type="project" value="UniProtKB-SubCell"/>
</dbReference>
<dbReference type="GO" id="GO:0039623">
    <property type="term" value="C:T=25 icosahedral viral capsid"/>
    <property type="evidence" value="ECO:0007669"/>
    <property type="project" value="UniProtKB-UniRule"/>
</dbReference>
<dbReference type="GO" id="GO:0005198">
    <property type="term" value="F:structural molecule activity"/>
    <property type="evidence" value="ECO:0007669"/>
    <property type="project" value="UniProtKB-UniRule"/>
</dbReference>
<dbReference type="GO" id="GO:0075521">
    <property type="term" value="P:microtubule-dependent intracellular transport of viral material towards nucleus"/>
    <property type="evidence" value="ECO:0007669"/>
    <property type="project" value="UniProtKB-UniRule"/>
</dbReference>
<dbReference type="GO" id="GO:0046718">
    <property type="term" value="P:symbiont entry into host cell"/>
    <property type="evidence" value="ECO:0007669"/>
    <property type="project" value="UniProtKB-UniRule"/>
</dbReference>
<dbReference type="FunFam" id="3.90.39.10:FF:000001">
    <property type="entry name" value="Hexon protein"/>
    <property type="match status" value="1"/>
</dbReference>
<dbReference type="Gene3D" id="2.170.9.10">
    <property type="entry name" value="Adenovirus Type 2 Hexon, domain 1"/>
    <property type="match status" value="1"/>
</dbReference>
<dbReference type="Gene3D" id="2.70.9.10">
    <property type="entry name" value="Adenovirus Type 2 Hexon, domain 4"/>
    <property type="match status" value="2"/>
</dbReference>
<dbReference type="Gene3D" id="3.90.39.10">
    <property type="entry name" value="Hexon Major Viral Coat Protein, domain 2"/>
    <property type="match status" value="1"/>
</dbReference>
<dbReference type="HAMAP" id="MF_04051">
    <property type="entry name" value="ADV_CAPSH"/>
    <property type="match status" value="1"/>
</dbReference>
<dbReference type="InterPro" id="IPR016108">
    <property type="entry name" value="Adenovirus_Pll_hexon_C"/>
</dbReference>
<dbReference type="InterPro" id="IPR016107">
    <property type="entry name" value="Adenovirus_Pll_hexon_N"/>
</dbReference>
<dbReference type="InterPro" id="IPR044942">
    <property type="entry name" value="Adenovirus_Pll_hexon_sub2"/>
</dbReference>
<dbReference type="InterPro" id="IPR037542">
    <property type="entry name" value="ADV_hexon"/>
</dbReference>
<dbReference type="InterPro" id="IPR016112">
    <property type="entry name" value="VP_dsDNA_II"/>
</dbReference>
<dbReference type="Pfam" id="PF01065">
    <property type="entry name" value="Adeno_hexon"/>
    <property type="match status" value="2"/>
</dbReference>
<dbReference type="Pfam" id="PF03678">
    <property type="entry name" value="Adeno_hexon_C"/>
    <property type="match status" value="1"/>
</dbReference>
<dbReference type="SUPFAM" id="SSF49749">
    <property type="entry name" value="Group II dsDNA viruses VP"/>
    <property type="match status" value="2"/>
</dbReference>
<evidence type="ECO:0000250" key="1">
    <source>
        <dbReference type="UniProtKB" id="P04133"/>
    </source>
</evidence>
<evidence type="ECO:0000255" key="2">
    <source>
        <dbReference type="HAMAP-Rule" id="MF_04051"/>
    </source>
</evidence>
<evidence type="ECO:0000256" key="3">
    <source>
        <dbReference type="SAM" id="MobiDB-lite"/>
    </source>
</evidence>
<evidence type="ECO:0000269" key="4">
    <source>
    </source>
</evidence>
<evidence type="ECO:0000269" key="5">
    <source>
    </source>
</evidence>
<evidence type="ECO:0000269" key="6">
    <source>
    </source>
</evidence>
<evidence type="ECO:0000269" key="7">
    <source>
    </source>
</evidence>
<evidence type="ECO:0000269" key="8">
    <source>
    </source>
</evidence>
<evidence type="ECO:0000269" key="9">
    <source>
    </source>
</evidence>
<evidence type="ECO:0000269" key="10">
    <source>
    </source>
</evidence>
<evidence type="ECO:0000269" key="11">
    <source>
    </source>
</evidence>
<evidence type="ECO:0000269" key="12">
    <source>
    </source>
</evidence>
<evidence type="ECO:0000305" key="13"/>
<evidence type="ECO:0007829" key="14">
    <source>
        <dbReference type="PDB" id="1P2Z"/>
    </source>
</evidence>
<gene>
    <name evidence="2" type="primary">L3</name>
</gene>
<keyword id="KW-0002">3D-structure</keyword>
<keyword id="KW-0007">Acetylation</keyword>
<keyword id="KW-0167">Capsid protein</keyword>
<keyword id="KW-1176">Cytoplasmic inwards viral transport</keyword>
<keyword id="KW-0903">Direct protein sequencing</keyword>
<keyword id="KW-1048">Host nucleus</keyword>
<keyword id="KW-0945">Host-virus interaction</keyword>
<keyword id="KW-0426">Late protein</keyword>
<keyword id="KW-1177">Microtubular inwards viral transport</keyword>
<keyword id="KW-0597">Phosphoprotein</keyword>
<keyword id="KW-1185">Reference proteome</keyword>
<keyword id="KW-1148">T=25 icosahedral capsid protein</keyword>
<keyword id="KW-0946">Virion</keyword>
<keyword id="KW-1160">Virus entry into host cell</keyword>
<feature type="initiator methionine" description="Removed; by host" evidence="2 9 10">
    <location>
        <position position="1"/>
    </location>
</feature>
<feature type="chain" id="PRO_0000221813" description="Hexon protein" evidence="2">
    <location>
        <begin position="2"/>
        <end position="968"/>
    </location>
</feature>
<feature type="region of interest" description="Disordered" evidence="3">
    <location>
        <begin position="125"/>
        <end position="188"/>
    </location>
</feature>
<feature type="compositionally biased region" description="Acidic residues" evidence="3">
    <location>
        <begin position="147"/>
        <end position="162"/>
    </location>
</feature>
<feature type="site" description="Involved in interaction with pre-protein VI" evidence="2">
    <location>
        <position position="793"/>
    </location>
</feature>
<feature type="modified residue" description="N-acetylalanine; by host" evidence="2 9">
    <location>
        <position position="2"/>
    </location>
</feature>
<feature type="modified residue" description="Phosphoserine; by host" evidence="2 8">
    <location>
        <position position="182"/>
    </location>
</feature>
<feature type="modified residue" description="Phosphoserine; by host" evidence="2 8">
    <location>
        <position position="283"/>
    </location>
</feature>
<feature type="modified residue" description="Phosphotyrosine; by host" evidence="8">
    <location>
        <position position="956"/>
    </location>
</feature>
<feature type="helix" evidence="14">
    <location>
        <begin position="7"/>
        <end position="12"/>
    </location>
</feature>
<feature type="strand" evidence="14">
    <location>
        <begin position="15"/>
        <end position="17"/>
    </location>
</feature>
<feature type="helix" evidence="14">
    <location>
        <begin position="20"/>
        <end position="23"/>
    </location>
</feature>
<feature type="helix" evidence="14">
    <location>
        <begin position="26"/>
        <end position="35"/>
    </location>
</feature>
<feature type="turn" evidence="14">
    <location>
        <begin position="36"/>
        <end position="38"/>
    </location>
</feature>
<feature type="helix" evidence="14">
    <location>
        <begin position="42"/>
        <end position="44"/>
    </location>
</feature>
<feature type="strand" evidence="14">
    <location>
        <begin position="54"/>
        <end position="57"/>
    </location>
</feature>
<feature type="strand" evidence="14">
    <location>
        <begin position="64"/>
        <end position="68"/>
    </location>
</feature>
<feature type="strand" evidence="14">
    <location>
        <begin position="71"/>
        <end position="75"/>
    </location>
</feature>
<feature type="strand" evidence="14">
    <location>
        <begin position="77"/>
        <end position="88"/>
    </location>
</feature>
<feature type="helix" evidence="14">
    <location>
        <begin position="96"/>
        <end position="98"/>
    </location>
</feature>
<feature type="strand" evidence="14">
    <location>
        <begin position="99"/>
        <end position="108"/>
    </location>
</feature>
<feature type="strand" evidence="14">
    <location>
        <begin position="116"/>
        <end position="118"/>
    </location>
</feature>
<feature type="strand" evidence="14">
    <location>
        <begin position="132"/>
        <end position="135"/>
    </location>
</feature>
<feature type="strand" evidence="14">
    <location>
        <begin position="174"/>
        <end position="176"/>
    </location>
</feature>
<feature type="strand" evidence="14">
    <location>
        <begin position="190"/>
        <end position="192"/>
    </location>
</feature>
<feature type="turn" evidence="14">
    <location>
        <begin position="209"/>
        <end position="211"/>
    </location>
</feature>
<feature type="strand" evidence="14">
    <location>
        <begin position="220"/>
        <end position="223"/>
    </location>
</feature>
<feature type="strand" evidence="14">
    <location>
        <begin position="228"/>
        <end position="235"/>
    </location>
</feature>
<feature type="strand" evidence="14">
    <location>
        <begin position="274"/>
        <end position="278"/>
    </location>
</feature>
<feature type="strand" evidence="14">
    <location>
        <begin position="296"/>
        <end position="301"/>
    </location>
</feature>
<feature type="strand" evidence="14">
    <location>
        <begin position="310"/>
        <end position="314"/>
    </location>
</feature>
<feature type="strand" evidence="14">
    <location>
        <begin position="316"/>
        <end position="319"/>
    </location>
</feature>
<feature type="helix" evidence="14">
    <location>
        <begin position="325"/>
        <end position="328"/>
    </location>
</feature>
<feature type="strand" evidence="14">
    <location>
        <begin position="330"/>
        <end position="333"/>
    </location>
</feature>
<feature type="strand" evidence="14">
    <location>
        <begin position="339"/>
        <end position="341"/>
    </location>
</feature>
<feature type="helix" evidence="14">
    <location>
        <begin position="343"/>
        <end position="345"/>
    </location>
</feature>
<feature type="helix" evidence="14">
    <location>
        <begin position="354"/>
        <end position="356"/>
    </location>
</feature>
<feature type="strand" evidence="14">
    <location>
        <begin position="359"/>
        <end position="362"/>
    </location>
</feature>
<feature type="turn" evidence="14">
    <location>
        <begin position="363"/>
        <end position="365"/>
    </location>
</feature>
<feature type="strand" evidence="14">
    <location>
        <begin position="367"/>
        <end position="369"/>
    </location>
</feature>
<feature type="helix" evidence="14">
    <location>
        <begin position="378"/>
        <end position="389"/>
    </location>
</feature>
<feature type="helix" evidence="14">
    <location>
        <begin position="397"/>
        <end position="399"/>
    </location>
</feature>
<feature type="helix" evidence="14">
    <location>
        <begin position="408"/>
        <end position="411"/>
    </location>
</feature>
<feature type="strand" evidence="14">
    <location>
        <begin position="412"/>
        <end position="414"/>
    </location>
</feature>
<feature type="strand" evidence="14">
    <location>
        <begin position="424"/>
        <end position="426"/>
    </location>
</feature>
<feature type="strand" evidence="14">
    <location>
        <begin position="436"/>
        <end position="438"/>
    </location>
</feature>
<feature type="strand" evidence="14">
    <location>
        <begin position="466"/>
        <end position="468"/>
    </location>
</feature>
<feature type="strand" evidence="14">
    <location>
        <begin position="476"/>
        <end position="478"/>
    </location>
</feature>
<feature type="helix" evidence="14">
    <location>
        <begin position="480"/>
        <end position="492"/>
    </location>
</feature>
<feature type="helix" evidence="14">
    <location>
        <begin position="494"/>
        <end position="496"/>
    </location>
</feature>
<feature type="helix" evidence="14">
    <location>
        <begin position="499"/>
        <end position="501"/>
    </location>
</feature>
<feature type="strand" evidence="14">
    <location>
        <begin position="506"/>
        <end position="508"/>
    </location>
</feature>
<feature type="helix" evidence="14">
    <location>
        <begin position="517"/>
        <end position="522"/>
    </location>
</feature>
<feature type="helix" evidence="14">
    <location>
        <begin position="527"/>
        <end position="530"/>
    </location>
</feature>
<feature type="turn" evidence="14">
    <location>
        <begin position="532"/>
        <end position="537"/>
    </location>
</feature>
<feature type="helix" evidence="14">
    <location>
        <begin position="543"/>
        <end position="546"/>
    </location>
</feature>
<feature type="helix" evidence="14">
    <location>
        <begin position="557"/>
        <end position="566"/>
    </location>
</feature>
<feature type="strand" evidence="14">
    <location>
        <begin position="568"/>
        <end position="578"/>
    </location>
</feature>
<feature type="turn" evidence="14">
    <location>
        <begin position="583"/>
        <end position="587"/>
    </location>
</feature>
<feature type="strand" evidence="14">
    <location>
        <begin position="592"/>
        <end position="602"/>
    </location>
</feature>
<feature type="helix" evidence="14">
    <location>
        <begin position="605"/>
        <end position="608"/>
    </location>
</feature>
<feature type="strand" evidence="14">
    <location>
        <begin position="609"/>
        <end position="613"/>
    </location>
</feature>
<feature type="turn" evidence="14">
    <location>
        <begin position="617"/>
        <end position="621"/>
    </location>
</feature>
<feature type="strand" evidence="14">
    <location>
        <begin position="623"/>
        <end position="634"/>
    </location>
</feature>
<feature type="helix" evidence="14">
    <location>
        <begin position="640"/>
        <end position="650"/>
    </location>
</feature>
<feature type="helix" evidence="14">
    <location>
        <begin position="653"/>
        <end position="655"/>
    </location>
</feature>
<feature type="strand" evidence="14">
    <location>
        <begin position="657"/>
        <end position="660"/>
    </location>
</feature>
<feature type="strand" evidence="14">
    <location>
        <begin position="665"/>
        <end position="672"/>
    </location>
</feature>
<feature type="strand" evidence="14">
    <location>
        <begin position="678"/>
        <end position="686"/>
    </location>
</feature>
<feature type="strand" evidence="14">
    <location>
        <begin position="693"/>
        <end position="700"/>
    </location>
</feature>
<feature type="helix" evidence="14">
    <location>
        <begin position="701"/>
        <end position="703"/>
    </location>
</feature>
<feature type="strand" evidence="14">
    <location>
        <begin position="708"/>
        <end position="710"/>
    </location>
</feature>
<feature type="helix" evidence="14">
    <location>
        <begin position="722"/>
        <end position="725"/>
    </location>
</feature>
<feature type="helix" evidence="14">
    <location>
        <begin position="731"/>
        <end position="733"/>
    </location>
</feature>
<feature type="strand" evidence="14">
    <location>
        <begin position="734"/>
        <end position="741"/>
    </location>
</feature>
<feature type="turn" evidence="14">
    <location>
        <begin position="742"/>
        <end position="744"/>
    </location>
</feature>
<feature type="strand" evidence="14">
    <location>
        <begin position="745"/>
        <end position="748"/>
    </location>
</feature>
<feature type="strand" evidence="14">
    <location>
        <begin position="753"/>
        <end position="755"/>
    </location>
</feature>
<feature type="strand" evidence="14">
    <location>
        <begin position="758"/>
        <end position="760"/>
    </location>
</feature>
<feature type="helix" evidence="14">
    <location>
        <begin position="765"/>
        <end position="770"/>
    </location>
</feature>
<feature type="strand" evidence="14">
    <location>
        <begin position="775"/>
        <end position="778"/>
    </location>
</feature>
<feature type="helix" evidence="14">
    <location>
        <begin position="779"/>
        <end position="790"/>
    </location>
</feature>
<feature type="turn" evidence="14">
    <location>
        <begin position="802"/>
        <end position="804"/>
    </location>
</feature>
<feature type="helix" evidence="14">
    <location>
        <begin position="810"/>
        <end position="813"/>
    </location>
</feature>
<feature type="strand" evidence="14">
    <location>
        <begin position="815"/>
        <end position="822"/>
    </location>
</feature>
<feature type="turn" evidence="14">
    <location>
        <begin position="824"/>
        <end position="826"/>
    </location>
</feature>
<feature type="helix" evidence="14">
    <location>
        <begin position="835"/>
        <end position="837"/>
    </location>
</feature>
<feature type="turn" evidence="14">
    <location>
        <begin position="842"/>
        <end position="844"/>
    </location>
</feature>
<feature type="strand" evidence="14">
    <location>
        <begin position="847"/>
        <end position="851"/>
    </location>
</feature>
<feature type="strand" evidence="14">
    <location>
        <begin position="866"/>
        <end position="868"/>
    </location>
</feature>
<feature type="strand" evidence="14">
    <location>
        <begin position="874"/>
        <end position="881"/>
    </location>
</feature>
<feature type="strand" evidence="14">
    <location>
        <begin position="887"/>
        <end position="890"/>
    </location>
</feature>
<feature type="helix" evidence="14">
    <location>
        <begin position="904"/>
        <end position="906"/>
    </location>
</feature>
<feature type="helix" evidence="14">
    <location>
        <begin position="908"/>
        <end position="910"/>
    </location>
</feature>
<feature type="strand" evidence="14">
    <location>
        <begin position="915"/>
        <end position="923"/>
    </location>
</feature>
<feature type="strand" evidence="14">
    <location>
        <begin position="930"/>
        <end position="937"/>
    </location>
</feature>
<feature type="strand" evidence="14">
    <location>
        <begin position="939"/>
        <end position="945"/>
    </location>
</feature>
<feature type="strand" evidence="14">
    <location>
        <begin position="953"/>
        <end position="961"/>
    </location>
</feature>